<name>GLPK_SHESH</name>
<comment type="function">
    <text evidence="1">Key enzyme in the regulation of glycerol uptake and metabolism. Catalyzes the phosphorylation of glycerol to yield sn-glycerol 3-phosphate.</text>
</comment>
<comment type="catalytic activity">
    <reaction evidence="1">
        <text>glycerol + ATP = sn-glycerol 3-phosphate + ADP + H(+)</text>
        <dbReference type="Rhea" id="RHEA:21644"/>
        <dbReference type="ChEBI" id="CHEBI:15378"/>
        <dbReference type="ChEBI" id="CHEBI:17754"/>
        <dbReference type="ChEBI" id="CHEBI:30616"/>
        <dbReference type="ChEBI" id="CHEBI:57597"/>
        <dbReference type="ChEBI" id="CHEBI:456216"/>
        <dbReference type="EC" id="2.7.1.30"/>
    </reaction>
</comment>
<comment type="activity regulation">
    <text evidence="1">Inhibited by fructose 1,6-bisphosphate (FBP).</text>
</comment>
<comment type="pathway">
    <text evidence="1">Polyol metabolism; glycerol degradation via glycerol kinase pathway; sn-glycerol 3-phosphate from glycerol: step 1/1.</text>
</comment>
<comment type="similarity">
    <text evidence="1">Belongs to the FGGY kinase family.</text>
</comment>
<protein>
    <recommendedName>
        <fullName evidence="1">Glycerol kinase</fullName>
        <ecNumber evidence="1">2.7.1.30</ecNumber>
    </recommendedName>
    <alternativeName>
        <fullName evidence="1">ATP:glycerol 3-phosphotransferase</fullName>
    </alternativeName>
    <alternativeName>
        <fullName evidence="1">Glycerokinase</fullName>
        <shortName evidence="1">GK</shortName>
    </alternativeName>
</protein>
<keyword id="KW-0067">ATP-binding</keyword>
<keyword id="KW-0319">Glycerol metabolism</keyword>
<keyword id="KW-0418">Kinase</keyword>
<keyword id="KW-0547">Nucleotide-binding</keyword>
<keyword id="KW-1185">Reference proteome</keyword>
<keyword id="KW-0808">Transferase</keyword>
<accession>A8FQ89</accession>
<organism>
    <name type="scientific">Shewanella sediminis (strain HAW-EB3)</name>
    <dbReference type="NCBI Taxonomy" id="425104"/>
    <lineage>
        <taxon>Bacteria</taxon>
        <taxon>Pseudomonadati</taxon>
        <taxon>Pseudomonadota</taxon>
        <taxon>Gammaproteobacteria</taxon>
        <taxon>Alteromonadales</taxon>
        <taxon>Shewanellaceae</taxon>
        <taxon>Shewanella</taxon>
    </lineage>
</organism>
<proteinExistence type="inferred from homology"/>
<dbReference type="EC" id="2.7.1.30" evidence="1"/>
<dbReference type="EMBL" id="CP000821">
    <property type="protein sequence ID" value="ABV35012.1"/>
    <property type="molecule type" value="Genomic_DNA"/>
</dbReference>
<dbReference type="RefSeq" id="WP_012140749.1">
    <property type="nucleotide sequence ID" value="NC_009831.1"/>
</dbReference>
<dbReference type="SMR" id="A8FQ89"/>
<dbReference type="STRING" id="425104.Ssed_0399"/>
<dbReference type="KEGG" id="sse:Ssed_0399"/>
<dbReference type="eggNOG" id="COG0554">
    <property type="taxonomic scope" value="Bacteria"/>
</dbReference>
<dbReference type="HOGENOM" id="CLU_009281_2_3_6"/>
<dbReference type="OrthoDB" id="9805576at2"/>
<dbReference type="UniPathway" id="UPA00618">
    <property type="reaction ID" value="UER00672"/>
</dbReference>
<dbReference type="Proteomes" id="UP000002015">
    <property type="component" value="Chromosome"/>
</dbReference>
<dbReference type="GO" id="GO:0005829">
    <property type="term" value="C:cytosol"/>
    <property type="evidence" value="ECO:0007669"/>
    <property type="project" value="TreeGrafter"/>
</dbReference>
<dbReference type="GO" id="GO:0005524">
    <property type="term" value="F:ATP binding"/>
    <property type="evidence" value="ECO:0007669"/>
    <property type="project" value="UniProtKB-UniRule"/>
</dbReference>
<dbReference type="GO" id="GO:0004370">
    <property type="term" value="F:glycerol kinase activity"/>
    <property type="evidence" value="ECO:0000250"/>
    <property type="project" value="UniProtKB"/>
</dbReference>
<dbReference type="GO" id="GO:0019563">
    <property type="term" value="P:glycerol catabolic process"/>
    <property type="evidence" value="ECO:0007669"/>
    <property type="project" value="UniProtKB-UniRule"/>
</dbReference>
<dbReference type="GO" id="GO:0006071">
    <property type="term" value="P:glycerol metabolic process"/>
    <property type="evidence" value="ECO:0000250"/>
    <property type="project" value="UniProtKB"/>
</dbReference>
<dbReference type="GO" id="GO:0006072">
    <property type="term" value="P:glycerol-3-phosphate metabolic process"/>
    <property type="evidence" value="ECO:0007669"/>
    <property type="project" value="InterPro"/>
</dbReference>
<dbReference type="CDD" id="cd07786">
    <property type="entry name" value="FGGY_EcGK_like"/>
    <property type="match status" value="1"/>
</dbReference>
<dbReference type="FunFam" id="3.30.420.40:FF:000007">
    <property type="entry name" value="Glycerol kinase"/>
    <property type="match status" value="1"/>
</dbReference>
<dbReference type="FunFam" id="3.30.420.40:FF:000008">
    <property type="entry name" value="Glycerol kinase"/>
    <property type="match status" value="1"/>
</dbReference>
<dbReference type="Gene3D" id="3.30.420.40">
    <property type="match status" value="2"/>
</dbReference>
<dbReference type="HAMAP" id="MF_00186">
    <property type="entry name" value="Glycerol_kin"/>
    <property type="match status" value="1"/>
</dbReference>
<dbReference type="InterPro" id="IPR043129">
    <property type="entry name" value="ATPase_NBD"/>
</dbReference>
<dbReference type="InterPro" id="IPR000577">
    <property type="entry name" value="Carb_kinase_FGGY"/>
</dbReference>
<dbReference type="InterPro" id="IPR018483">
    <property type="entry name" value="Carb_kinase_FGGY_CS"/>
</dbReference>
<dbReference type="InterPro" id="IPR018485">
    <property type="entry name" value="FGGY_C"/>
</dbReference>
<dbReference type="InterPro" id="IPR018484">
    <property type="entry name" value="FGGY_N"/>
</dbReference>
<dbReference type="InterPro" id="IPR005999">
    <property type="entry name" value="Glycerol_kin"/>
</dbReference>
<dbReference type="NCBIfam" id="TIGR01311">
    <property type="entry name" value="glycerol_kin"/>
    <property type="match status" value="1"/>
</dbReference>
<dbReference type="NCBIfam" id="NF000756">
    <property type="entry name" value="PRK00047.1"/>
    <property type="match status" value="1"/>
</dbReference>
<dbReference type="PANTHER" id="PTHR10196:SF69">
    <property type="entry name" value="GLYCEROL KINASE"/>
    <property type="match status" value="1"/>
</dbReference>
<dbReference type="PANTHER" id="PTHR10196">
    <property type="entry name" value="SUGAR KINASE"/>
    <property type="match status" value="1"/>
</dbReference>
<dbReference type="Pfam" id="PF02782">
    <property type="entry name" value="FGGY_C"/>
    <property type="match status" value="1"/>
</dbReference>
<dbReference type="Pfam" id="PF00370">
    <property type="entry name" value="FGGY_N"/>
    <property type="match status" value="1"/>
</dbReference>
<dbReference type="PIRSF" id="PIRSF000538">
    <property type="entry name" value="GlpK"/>
    <property type="match status" value="1"/>
</dbReference>
<dbReference type="SUPFAM" id="SSF53067">
    <property type="entry name" value="Actin-like ATPase domain"/>
    <property type="match status" value="2"/>
</dbReference>
<dbReference type="PROSITE" id="PS00933">
    <property type="entry name" value="FGGY_KINASES_1"/>
    <property type="match status" value="1"/>
</dbReference>
<dbReference type="PROSITE" id="PS00445">
    <property type="entry name" value="FGGY_KINASES_2"/>
    <property type="match status" value="1"/>
</dbReference>
<reference key="1">
    <citation type="submission" date="2007-08" db="EMBL/GenBank/DDBJ databases">
        <title>Complete sequence of Shewanella sediminis HAW-EB3.</title>
        <authorList>
            <consortium name="US DOE Joint Genome Institute"/>
            <person name="Copeland A."/>
            <person name="Lucas S."/>
            <person name="Lapidus A."/>
            <person name="Barry K."/>
            <person name="Glavina del Rio T."/>
            <person name="Dalin E."/>
            <person name="Tice H."/>
            <person name="Pitluck S."/>
            <person name="Chertkov O."/>
            <person name="Brettin T."/>
            <person name="Bruce D."/>
            <person name="Detter J.C."/>
            <person name="Han C."/>
            <person name="Schmutz J."/>
            <person name="Larimer F."/>
            <person name="Land M."/>
            <person name="Hauser L."/>
            <person name="Kyrpides N."/>
            <person name="Kim E."/>
            <person name="Zhao J.-S."/>
            <person name="Richardson P."/>
        </authorList>
    </citation>
    <scope>NUCLEOTIDE SEQUENCE [LARGE SCALE GENOMIC DNA]</scope>
    <source>
        <strain>HAW-EB3</strain>
    </source>
</reference>
<gene>
    <name evidence="1" type="primary">glpK</name>
    <name type="ordered locus">Ssed_0399</name>
</gene>
<evidence type="ECO:0000255" key="1">
    <source>
        <dbReference type="HAMAP-Rule" id="MF_00186"/>
    </source>
</evidence>
<feature type="chain" id="PRO_1000077431" description="Glycerol kinase">
    <location>
        <begin position="1"/>
        <end position="495"/>
    </location>
</feature>
<feature type="binding site" evidence="1">
    <location>
        <position position="13"/>
    </location>
    <ligand>
        <name>ADP</name>
        <dbReference type="ChEBI" id="CHEBI:456216"/>
    </ligand>
</feature>
<feature type="binding site" evidence="1">
    <location>
        <position position="13"/>
    </location>
    <ligand>
        <name>ATP</name>
        <dbReference type="ChEBI" id="CHEBI:30616"/>
    </ligand>
</feature>
<feature type="binding site" evidence="1">
    <location>
        <position position="13"/>
    </location>
    <ligand>
        <name>sn-glycerol 3-phosphate</name>
        <dbReference type="ChEBI" id="CHEBI:57597"/>
    </ligand>
</feature>
<feature type="binding site" evidence="1">
    <location>
        <position position="14"/>
    </location>
    <ligand>
        <name>ATP</name>
        <dbReference type="ChEBI" id="CHEBI:30616"/>
    </ligand>
</feature>
<feature type="binding site" evidence="1">
    <location>
        <position position="15"/>
    </location>
    <ligand>
        <name>ATP</name>
        <dbReference type="ChEBI" id="CHEBI:30616"/>
    </ligand>
</feature>
<feature type="binding site" evidence="1">
    <location>
        <position position="17"/>
    </location>
    <ligand>
        <name>ADP</name>
        <dbReference type="ChEBI" id="CHEBI:456216"/>
    </ligand>
</feature>
<feature type="binding site" evidence="1">
    <location>
        <position position="83"/>
    </location>
    <ligand>
        <name>glycerol</name>
        <dbReference type="ChEBI" id="CHEBI:17754"/>
    </ligand>
</feature>
<feature type="binding site" evidence="1">
    <location>
        <position position="83"/>
    </location>
    <ligand>
        <name>sn-glycerol 3-phosphate</name>
        <dbReference type="ChEBI" id="CHEBI:57597"/>
    </ligand>
</feature>
<feature type="binding site" evidence="1">
    <location>
        <position position="84"/>
    </location>
    <ligand>
        <name>glycerol</name>
        <dbReference type="ChEBI" id="CHEBI:17754"/>
    </ligand>
</feature>
<feature type="binding site" evidence="1">
    <location>
        <position position="84"/>
    </location>
    <ligand>
        <name>sn-glycerol 3-phosphate</name>
        <dbReference type="ChEBI" id="CHEBI:57597"/>
    </ligand>
</feature>
<feature type="binding site" evidence="1">
    <location>
        <position position="135"/>
    </location>
    <ligand>
        <name>glycerol</name>
        <dbReference type="ChEBI" id="CHEBI:17754"/>
    </ligand>
</feature>
<feature type="binding site" evidence="1">
    <location>
        <position position="135"/>
    </location>
    <ligand>
        <name>sn-glycerol 3-phosphate</name>
        <dbReference type="ChEBI" id="CHEBI:57597"/>
    </ligand>
</feature>
<feature type="binding site" evidence="1">
    <location>
        <position position="244"/>
    </location>
    <ligand>
        <name>glycerol</name>
        <dbReference type="ChEBI" id="CHEBI:17754"/>
    </ligand>
</feature>
<feature type="binding site" evidence="1">
    <location>
        <position position="244"/>
    </location>
    <ligand>
        <name>sn-glycerol 3-phosphate</name>
        <dbReference type="ChEBI" id="CHEBI:57597"/>
    </ligand>
</feature>
<feature type="binding site" evidence="1">
    <location>
        <position position="245"/>
    </location>
    <ligand>
        <name>glycerol</name>
        <dbReference type="ChEBI" id="CHEBI:17754"/>
    </ligand>
</feature>
<feature type="binding site" evidence="1">
    <location>
        <position position="266"/>
    </location>
    <ligand>
        <name>ADP</name>
        <dbReference type="ChEBI" id="CHEBI:456216"/>
    </ligand>
</feature>
<feature type="binding site" evidence="1">
    <location>
        <position position="266"/>
    </location>
    <ligand>
        <name>ATP</name>
        <dbReference type="ChEBI" id="CHEBI:30616"/>
    </ligand>
</feature>
<feature type="binding site" evidence="1">
    <location>
        <position position="309"/>
    </location>
    <ligand>
        <name>ADP</name>
        <dbReference type="ChEBI" id="CHEBI:456216"/>
    </ligand>
</feature>
<feature type="binding site" evidence="1">
    <location>
        <position position="309"/>
    </location>
    <ligand>
        <name>ATP</name>
        <dbReference type="ChEBI" id="CHEBI:30616"/>
    </ligand>
</feature>
<feature type="binding site" evidence="1">
    <location>
        <position position="313"/>
    </location>
    <ligand>
        <name>ATP</name>
        <dbReference type="ChEBI" id="CHEBI:30616"/>
    </ligand>
</feature>
<feature type="binding site" evidence="1">
    <location>
        <position position="410"/>
    </location>
    <ligand>
        <name>ADP</name>
        <dbReference type="ChEBI" id="CHEBI:456216"/>
    </ligand>
</feature>
<feature type="binding site" evidence="1">
    <location>
        <position position="410"/>
    </location>
    <ligand>
        <name>ATP</name>
        <dbReference type="ChEBI" id="CHEBI:30616"/>
    </ligand>
</feature>
<feature type="binding site" evidence="1">
    <location>
        <position position="414"/>
    </location>
    <ligand>
        <name>ADP</name>
        <dbReference type="ChEBI" id="CHEBI:456216"/>
    </ligand>
</feature>
<sequence>MAKKYVVALDQGTTSSRAIIFDHDANIVSVSQREFPQIYPQAGWVEHDPMEIWASQSSTLIELLARSGIHGSEVAAIGITNQRETTVIWDKLTGKPVYNAIVWQCRRSSHICDELKAQGLEDYVRETTGLLLDPYFSGTKIKWILDNVAGVRERAEKGELLFGTIDTWLVWKLTEGKVHVTDPTNASRTLLFNIHTQQWDSKLLEALNIPESLLPEVKPSCAVYGKTRIAGEGGEISIAGIAGDQQSALFGQLCIDEGMAKNTYGTGCFLLMNTGKQAVKSTHGLLTTVAIGADCEVNYALEGAVFMGGATIQWLRDELGLIRDAQDTEYFASKVEDTNGVYLVPAFVGLGAPYWDPNARGALVGLTRGSNRNHIIRAALEAIAYQSRDLLDAMAKDSGVMLKQLKVDGGAVSNDFLMQFQADITNVEVQRPAITETTAMGAAFLAGLAVGFWSSTSELKHKADIERTFIPSISAEKCDELYCGWNRAVTQTIKS</sequence>